<accession>Q65TN4</accession>
<organism>
    <name type="scientific">Mannheimia succiniciproducens (strain KCTC 0769BP / MBEL55E)</name>
    <dbReference type="NCBI Taxonomy" id="221988"/>
    <lineage>
        <taxon>Bacteria</taxon>
        <taxon>Pseudomonadati</taxon>
        <taxon>Pseudomonadota</taxon>
        <taxon>Gammaproteobacteria</taxon>
        <taxon>Pasteurellales</taxon>
        <taxon>Pasteurellaceae</taxon>
        <taxon>Basfia</taxon>
    </lineage>
</organism>
<feature type="chain" id="PRO_0000163040" description="NADPH-dependent 7-cyano-7-deazaguanine reductase">
    <location>
        <begin position="1"/>
        <end position="281"/>
    </location>
</feature>
<feature type="active site" description="Thioimide intermediate" evidence="1">
    <location>
        <position position="189"/>
    </location>
</feature>
<feature type="active site" description="Proton donor" evidence="1">
    <location>
        <position position="196"/>
    </location>
</feature>
<feature type="binding site" evidence="1">
    <location>
        <begin position="86"/>
        <end position="88"/>
    </location>
    <ligand>
        <name>substrate</name>
    </ligand>
</feature>
<feature type="binding site" evidence="1">
    <location>
        <begin position="88"/>
        <end position="89"/>
    </location>
    <ligand>
        <name>NADPH</name>
        <dbReference type="ChEBI" id="CHEBI:57783"/>
    </ligand>
</feature>
<feature type="binding site" evidence="1">
    <location>
        <begin position="228"/>
        <end position="229"/>
    </location>
    <ligand>
        <name>substrate</name>
    </ligand>
</feature>
<feature type="binding site" evidence="1">
    <location>
        <begin position="257"/>
        <end position="258"/>
    </location>
    <ligand>
        <name>NADPH</name>
        <dbReference type="ChEBI" id="CHEBI:57783"/>
    </ligand>
</feature>
<dbReference type="EC" id="1.7.1.13" evidence="1"/>
<dbReference type="EMBL" id="AE016827">
    <property type="protein sequence ID" value="AAU37676.1"/>
    <property type="molecule type" value="Genomic_DNA"/>
</dbReference>
<dbReference type="RefSeq" id="WP_011200244.1">
    <property type="nucleotide sequence ID" value="NC_006300.1"/>
</dbReference>
<dbReference type="SMR" id="Q65TN4"/>
<dbReference type="STRING" id="221988.MS1069"/>
<dbReference type="KEGG" id="msu:MS1069"/>
<dbReference type="eggNOG" id="COG0780">
    <property type="taxonomic scope" value="Bacteria"/>
</dbReference>
<dbReference type="eggNOG" id="COG2904">
    <property type="taxonomic scope" value="Bacteria"/>
</dbReference>
<dbReference type="HOGENOM" id="CLU_054738_0_0_6"/>
<dbReference type="OrthoDB" id="9789995at2"/>
<dbReference type="UniPathway" id="UPA00392"/>
<dbReference type="Proteomes" id="UP000000607">
    <property type="component" value="Chromosome"/>
</dbReference>
<dbReference type="GO" id="GO:0005737">
    <property type="term" value="C:cytoplasm"/>
    <property type="evidence" value="ECO:0007669"/>
    <property type="project" value="UniProtKB-SubCell"/>
</dbReference>
<dbReference type="GO" id="GO:0033739">
    <property type="term" value="F:preQ1 synthase activity"/>
    <property type="evidence" value="ECO:0007669"/>
    <property type="project" value="UniProtKB-UniRule"/>
</dbReference>
<dbReference type="GO" id="GO:0008616">
    <property type="term" value="P:queuosine biosynthetic process"/>
    <property type="evidence" value="ECO:0007669"/>
    <property type="project" value="UniProtKB-UniRule"/>
</dbReference>
<dbReference type="GO" id="GO:0006400">
    <property type="term" value="P:tRNA modification"/>
    <property type="evidence" value="ECO:0007669"/>
    <property type="project" value="UniProtKB-UniRule"/>
</dbReference>
<dbReference type="Gene3D" id="3.30.1130.10">
    <property type="match status" value="2"/>
</dbReference>
<dbReference type="HAMAP" id="MF_00817">
    <property type="entry name" value="QueF_type2"/>
    <property type="match status" value="1"/>
</dbReference>
<dbReference type="InterPro" id="IPR043133">
    <property type="entry name" value="GTP-CH-I_C/QueF"/>
</dbReference>
<dbReference type="InterPro" id="IPR050084">
    <property type="entry name" value="NADPH_dep_7-cyano-7-deazaG_red"/>
</dbReference>
<dbReference type="InterPro" id="IPR029500">
    <property type="entry name" value="QueF"/>
</dbReference>
<dbReference type="InterPro" id="IPR029139">
    <property type="entry name" value="QueF_N"/>
</dbReference>
<dbReference type="InterPro" id="IPR016428">
    <property type="entry name" value="QueF_type2"/>
</dbReference>
<dbReference type="NCBIfam" id="TIGR03138">
    <property type="entry name" value="QueF"/>
    <property type="match status" value="1"/>
</dbReference>
<dbReference type="PANTHER" id="PTHR34354">
    <property type="entry name" value="NADPH-DEPENDENT 7-CYANO-7-DEAZAGUANINE REDUCTASE"/>
    <property type="match status" value="1"/>
</dbReference>
<dbReference type="PANTHER" id="PTHR34354:SF1">
    <property type="entry name" value="NADPH-DEPENDENT 7-CYANO-7-DEAZAGUANINE REDUCTASE"/>
    <property type="match status" value="1"/>
</dbReference>
<dbReference type="Pfam" id="PF14489">
    <property type="entry name" value="QueF"/>
    <property type="match status" value="1"/>
</dbReference>
<dbReference type="Pfam" id="PF14819">
    <property type="entry name" value="QueF_N"/>
    <property type="match status" value="1"/>
</dbReference>
<dbReference type="PIRSF" id="PIRSF004750">
    <property type="entry name" value="Nitrile_oxidored_YqcD_prd"/>
    <property type="match status" value="1"/>
</dbReference>
<dbReference type="SUPFAM" id="SSF55620">
    <property type="entry name" value="Tetrahydrobiopterin biosynthesis enzymes-like"/>
    <property type="match status" value="1"/>
</dbReference>
<proteinExistence type="inferred from homology"/>
<comment type="function">
    <text evidence="1">Catalyzes the NADPH-dependent reduction of 7-cyano-7-deazaguanine (preQ0) to 7-aminomethyl-7-deazaguanine (preQ1).</text>
</comment>
<comment type="catalytic activity">
    <reaction evidence="1">
        <text>7-aminomethyl-7-carbaguanine + 2 NADP(+) = 7-cyano-7-deazaguanine + 2 NADPH + 3 H(+)</text>
        <dbReference type="Rhea" id="RHEA:13409"/>
        <dbReference type="ChEBI" id="CHEBI:15378"/>
        <dbReference type="ChEBI" id="CHEBI:45075"/>
        <dbReference type="ChEBI" id="CHEBI:57783"/>
        <dbReference type="ChEBI" id="CHEBI:58349"/>
        <dbReference type="ChEBI" id="CHEBI:58703"/>
        <dbReference type="EC" id="1.7.1.13"/>
    </reaction>
</comment>
<comment type="pathway">
    <text evidence="1">tRNA modification; tRNA-queuosine biosynthesis.</text>
</comment>
<comment type="subunit">
    <text evidence="1">Homodimer.</text>
</comment>
<comment type="subcellular location">
    <subcellularLocation>
        <location evidence="1">Cytoplasm</location>
    </subcellularLocation>
</comment>
<comment type="similarity">
    <text evidence="1">Belongs to the GTP cyclohydrolase I family. QueF type 2 subfamily.</text>
</comment>
<protein>
    <recommendedName>
        <fullName evidence="1">NADPH-dependent 7-cyano-7-deazaguanine reductase</fullName>
        <ecNumber evidence="1">1.7.1.13</ecNumber>
    </recommendedName>
    <alternativeName>
        <fullName evidence="1">7-cyano-7-carbaguanine reductase</fullName>
    </alternativeName>
    <alternativeName>
        <fullName evidence="1">NADPH-dependent nitrile oxidoreductase</fullName>
    </alternativeName>
    <alternativeName>
        <fullName evidence="1">PreQ(0) reductase</fullName>
    </alternativeName>
</protein>
<reference key="1">
    <citation type="journal article" date="2004" name="Nat. Biotechnol.">
        <title>The genome sequence of the capnophilic rumen bacterium Mannheimia succiniciproducens.</title>
        <authorList>
            <person name="Hong S.H."/>
            <person name="Kim J.S."/>
            <person name="Lee S.Y."/>
            <person name="In Y.H."/>
            <person name="Choi S.S."/>
            <person name="Rih J.-K."/>
            <person name="Kim C.H."/>
            <person name="Jeong H."/>
            <person name="Hur C.G."/>
            <person name="Kim J.J."/>
        </authorList>
    </citation>
    <scope>NUCLEOTIDE SEQUENCE [LARGE SCALE GENOMIC DNA]</scope>
    <source>
        <strain>KCTC 0769BP / MBEL55E</strain>
    </source>
</reference>
<gene>
    <name evidence="1" type="primary">queF</name>
    <name type="ordered locus">MS1069</name>
</gene>
<name>QUEF_MANSM</name>
<keyword id="KW-0963">Cytoplasm</keyword>
<keyword id="KW-0521">NADP</keyword>
<keyword id="KW-0560">Oxidoreductase</keyword>
<keyword id="KW-0671">Queuosine biosynthesis</keyword>
<sequence length="281" mass="32473">MDYKDNSLKTLKLGQKTDYIANYDRTLLQPVPRALNRDGLGITKQQPFSVGADIWTAYEISWLNIKGLPQVAIADVEIDYRSTNLIESKSFKLYLNSFNQTKFSDMSEVQRTISEDLSICAEGNVRVQLHSLSNYSHERIADFAGECLDELDIEISDYGFNAEILQNCTALSTEIVEETLVSHLLKSNCLITSQPDWGSVQIHYQGKRIDHEKLLRYLVSFRQHNEFHEQCVERIYCDIMKYARPEKLTVYARYTRRGGLDINPFRSNFEAIPQNLRLARQ</sequence>
<evidence type="ECO:0000255" key="1">
    <source>
        <dbReference type="HAMAP-Rule" id="MF_00817"/>
    </source>
</evidence>